<proteinExistence type="evidence at transcript level"/>
<feature type="chain" id="PRO_0000282429" description="Solute carrier family 66 member 2">
    <location>
        <begin position="1"/>
        <end position="253"/>
    </location>
</feature>
<feature type="transmembrane region" description="Helical" evidence="1">
    <location>
        <begin position="7"/>
        <end position="27"/>
    </location>
</feature>
<feature type="transmembrane region" description="Helical" evidence="1">
    <location>
        <begin position="49"/>
        <end position="69"/>
    </location>
</feature>
<feature type="transmembrane region" description="Helical" evidence="1">
    <location>
        <begin position="72"/>
        <end position="92"/>
    </location>
</feature>
<feature type="transmembrane region" description="Helical" evidence="1">
    <location>
        <begin position="125"/>
        <end position="145"/>
    </location>
</feature>
<feature type="transmembrane region" description="Helical" evidence="1">
    <location>
        <begin position="150"/>
        <end position="170"/>
    </location>
</feature>
<feature type="transmembrane region" description="Helical" evidence="1">
    <location>
        <begin position="214"/>
        <end position="234"/>
    </location>
</feature>
<feature type="domain" description="PQ-loop 1">
    <location>
        <begin position="14"/>
        <end position="80"/>
    </location>
</feature>
<feature type="domain" description="PQ-loop 2">
    <location>
        <begin position="160"/>
        <end position="215"/>
    </location>
</feature>
<name>S66A2_BOVIN</name>
<comment type="subcellular location">
    <subcellularLocation>
        <location evidence="2">Membrane</location>
        <topology evidence="2">Multi-pass membrane protein</topology>
    </subcellularLocation>
</comment>
<organism>
    <name type="scientific">Bos taurus</name>
    <name type="common">Bovine</name>
    <dbReference type="NCBI Taxonomy" id="9913"/>
    <lineage>
        <taxon>Eukaryota</taxon>
        <taxon>Metazoa</taxon>
        <taxon>Chordata</taxon>
        <taxon>Craniata</taxon>
        <taxon>Vertebrata</taxon>
        <taxon>Euteleostomi</taxon>
        <taxon>Mammalia</taxon>
        <taxon>Eutheria</taxon>
        <taxon>Laurasiatheria</taxon>
        <taxon>Artiodactyla</taxon>
        <taxon>Ruminantia</taxon>
        <taxon>Pecora</taxon>
        <taxon>Bovidae</taxon>
        <taxon>Bovinae</taxon>
        <taxon>Bos</taxon>
    </lineage>
</organism>
<accession>Q0VCC1</accession>
<evidence type="ECO:0000255" key="1"/>
<evidence type="ECO:0000305" key="2"/>
<keyword id="KW-0472">Membrane</keyword>
<keyword id="KW-1185">Reference proteome</keyword>
<keyword id="KW-0677">Repeat</keyword>
<keyword id="KW-0812">Transmembrane</keyword>
<keyword id="KW-1133">Transmembrane helix</keyword>
<sequence>MEAEGLGWLLVPLHQLVSWGAAGAMVFGGVVPYIPQYRDIRRTQNAEGFSTYVCLVLLVANILRILFWFGRHFESPLLWQSVVMILTMLLMLKLCTEVRVANELNLKRRVFSDFDPHHFWHWSSFADYVQCVLAFTGVAGYITYLSIDSALFVETLGFLAVLTEAMLGVPQLYRNHRHQSTEGMSIKMVLMWTSGDTFKTAYFLLNGAPLQFSVCGLLQVLVDLAILGQAYVFTRYPLKPAPHAAHPASAKAL</sequence>
<reference key="1">
    <citation type="submission" date="2006-08" db="EMBL/GenBank/DDBJ databases">
        <authorList>
            <consortium name="NIH - Mammalian Gene Collection (MGC) project"/>
        </authorList>
    </citation>
    <scope>NUCLEOTIDE SEQUENCE [LARGE SCALE MRNA]</scope>
    <source>
        <strain>Hereford</strain>
        <tissue>Fetal lung</tissue>
    </source>
</reference>
<gene>
    <name type="primary">SLC66A2</name>
    <name type="synonym">PQLC1</name>
</gene>
<dbReference type="EMBL" id="BC120242">
    <property type="protein sequence ID" value="AAI20243.1"/>
    <property type="molecule type" value="mRNA"/>
</dbReference>
<dbReference type="RefSeq" id="NP_001070361.1">
    <property type="nucleotide sequence ID" value="NM_001076893.1"/>
</dbReference>
<dbReference type="RefSeq" id="XP_024840084.1">
    <property type="nucleotide sequence ID" value="XM_024984316.2"/>
</dbReference>
<dbReference type="SMR" id="Q0VCC1"/>
<dbReference type="FunCoup" id="Q0VCC1">
    <property type="interactions" value="1134"/>
</dbReference>
<dbReference type="STRING" id="9913.ENSBTAP00000069387"/>
<dbReference type="Ensembl" id="ENSBTAT00000073622.1">
    <property type="protein sequence ID" value="ENSBTAP00000070387.1"/>
    <property type="gene ID" value="ENSBTAG00000054103.2"/>
</dbReference>
<dbReference type="GeneID" id="533304"/>
<dbReference type="KEGG" id="bta:533304"/>
<dbReference type="CTD" id="80148"/>
<dbReference type="VEuPathDB" id="HostDB:ENSBTAG00000054103"/>
<dbReference type="VGNC" id="VGNC:106934">
    <property type="gene designation" value="SLC66A2"/>
</dbReference>
<dbReference type="GeneTree" id="ENSGT00390000002381"/>
<dbReference type="InParanoid" id="Q0VCC1"/>
<dbReference type="OrthoDB" id="292213at2759"/>
<dbReference type="Proteomes" id="UP000009136">
    <property type="component" value="Chromosome 24"/>
</dbReference>
<dbReference type="Bgee" id="ENSBTAG00000054103">
    <property type="expression patterns" value="Expressed in corpus epididymis and 105 other cell types or tissues"/>
</dbReference>
<dbReference type="GO" id="GO:0005829">
    <property type="term" value="C:cytosol"/>
    <property type="evidence" value="ECO:0007669"/>
    <property type="project" value="GOC"/>
</dbReference>
<dbReference type="GO" id="GO:0005768">
    <property type="term" value="C:endosome"/>
    <property type="evidence" value="ECO:0000318"/>
    <property type="project" value="GO_Central"/>
</dbReference>
<dbReference type="GO" id="GO:0016020">
    <property type="term" value="C:membrane"/>
    <property type="evidence" value="ECO:0007669"/>
    <property type="project" value="UniProtKB-SubCell"/>
</dbReference>
<dbReference type="GO" id="GO:0005802">
    <property type="term" value="C:trans-Golgi network"/>
    <property type="evidence" value="ECO:0000318"/>
    <property type="project" value="GO_Central"/>
</dbReference>
<dbReference type="GO" id="GO:0045332">
    <property type="term" value="P:phospholipid translocation"/>
    <property type="evidence" value="ECO:0000318"/>
    <property type="project" value="GO_Central"/>
</dbReference>
<dbReference type="GO" id="GO:0042147">
    <property type="term" value="P:retrograde transport, endosome to Golgi"/>
    <property type="evidence" value="ECO:0000318"/>
    <property type="project" value="GO_Central"/>
</dbReference>
<dbReference type="FunFam" id="1.20.1280.290:FF:000005">
    <property type="entry name" value="PQ-loop repeat-containing protein 1"/>
    <property type="match status" value="1"/>
</dbReference>
<dbReference type="FunFam" id="1.20.1280.290:FF:000008">
    <property type="entry name" value="PQ-loop repeat-containing protein 1"/>
    <property type="match status" value="1"/>
</dbReference>
<dbReference type="Gene3D" id="1.20.1280.290">
    <property type="match status" value="2"/>
</dbReference>
<dbReference type="InterPro" id="IPR006603">
    <property type="entry name" value="PQ-loop_rpt"/>
</dbReference>
<dbReference type="InterPro" id="IPR052241">
    <property type="entry name" value="SLC66/Scramblase_ANY1"/>
</dbReference>
<dbReference type="PANTHER" id="PTHR14856">
    <property type="entry name" value="PQ-LOOP REPEAT-CONTAINING PROTEIN 1-LIKE PROTEIN"/>
    <property type="match status" value="1"/>
</dbReference>
<dbReference type="PANTHER" id="PTHR14856:SF10">
    <property type="entry name" value="SOLUTE CARRIER FAMILY 66 MEMBER 2"/>
    <property type="match status" value="1"/>
</dbReference>
<dbReference type="Pfam" id="PF04193">
    <property type="entry name" value="PQ-loop"/>
    <property type="match status" value="2"/>
</dbReference>
<dbReference type="SMART" id="SM00679">
    <property type="entry name" value="CTNS"/>
    <property type="match status" value="2"/>
</dbReference>
<protein>
    <recommendedName>
        <fullName evidence="2">Solute carrier family 66 member 2</fullName>
    </recommendedName>
    <alternativeName>
        <fullName>PQ-loop repeat-containing protein 1</fullName>
    </alternativeName>
</protein>